<name>Y1112_STRPN</name>
<proteinExistence type="evidence at protein level"/>
<evidence type="ECO:0000250" key="1"/>
<evidence type="ECO:0000250" key="2">
    <source>
        <dbReference type="UniProtKB" id="Q9X1H9"/>
    </source>
</evidence>
<evidence type="ECO:0000255" key="3">
    <source>
        <dbReference type="PROSITE-ProRule" id="PRU00815"/>
    </source>
</evidence>
<accession>Q97QT7</accession>
<sequence>MTKIKIVTDSSVTIEPELVKQLDITIVPLSVMIDNVVYSDADLKEEGKFLQLMQESKNLPKTSQPPVGVFAEIFEDLCKDGGQILAIHMSHALSGTVEAARQGASLSTADVTVVDSSFTDQALKFQVVEAAKLAQEGKDMEAILSHVEEVKNHTELYIGVSTLENLVKGGRISRVTGLLSSLLNIRAVMQMKDHELQPMVKGRGTKTFKKWLDELITSLSERAVAEIGISYSGSDDWAKEMKESLQAYVEKPISVLETGSIIQTHTGENAWAILIRYHS</sequence>
<feature type="chain" id="PRO_0000209795" description="DegV domain-containing protein SP_1112">
    <location>
        <begin position="1"/>
        <end position="279"/>
    </location>
</feature>
<feature type="domain" description="DegV" evidence="3">
    <location>
        <begin position="4"/>
        <end position="277"/>
    </location>
</feature>
<feature type="binding site" evidence="2">
    <location>
        <position position="62"/>
    </location>
    <ligand>
        <name>hexadecanoate</name>
        <dbReference type="ChEBI" id="CHEBI:7896"/>
    </ligand>
</feature>
<feature type="binding site" evidence="2">
    <location>
        <position position="94"/>
    </location>
    <ligand>
        <name>hexadecanoate</name>
        <dbReference type="ChEBI" id="CHEBI:7896"/>
    </ligand>
</feature>
<protein>
    <recommendedName>
        <fullName>DegV domain-containing protein SP_1112</fullName>
    </recommendedName>
</protein>
<organism>
    <name type="scientific">Streptococcus pneumoniae serotype 4 (strain ATCC BAA-334 / TIGR4)</name>
    <dbReference type="NCBI Taxonomy" id="170187"/>
    <lineage>
        <taxon>Bacteria</taxon>
        <taxon>Bacillati</taxon>
        <taxon>Bacillota</taxon>
        <taxon>Bacilli</taxon>
        <taxon>Lactobacillales</taxon>
        <taxon>Streptococcaceae</taxon>
        <taxon>Streptococcus</taxon>
    </lineage>
</organism>
<dbReference type="EMBL" id="AE005672">
    <property type="protein sequence ID" value="AAK75223.1"/>
    <property type="molecule type" value="Genomic_DNA"/>
</dbReference>
<dbReference type="PIR" id="F95128">
    <property type="entry name" value="F95128"/>
</dbReference>
<dbReference type="RefSeq" id="WP_000161399.1">
    <property type="nucleotide sequence ID" value="NZ_CP155539.1"/>
</dbReference>
<dbReference type="SMR" id="Q97QT7"/>
<dbReference type="IntAct" id="Q97QT7">
    <property type="interactions" value="1"/>
</dbReference>
<dbReference type="PaxDb" id="170187-SP_1112"/>
<dbReference type="EnsemblBacteria" id="AAK75223">
    <property type="protein sequence ID" value="AAK75223"/>
    <property type="gene ID" value="SP_1112"/>
</dbReference>
<dbReference type="KEGG" id="spn:SP_1112"/>
<dbReference type="eggNOG" id="COG1307">
    <property type="taxonomic scope" value="Bacteria"/>
</dbReference>
<dbReference type="PhylomeDB" id="Q97QT7"/>
<dbReference type="BioCyc" id="SPNE170187:G1FZB-1137-MONOMER"/>
<dbReference type="Proteomes" id="UP000000585">
    <property type="component" value="Chromosome"/>
</dbReference>
<dbReference type="GO" id="GO:0008289">
    <property type="term" value="F:lipid binding"/>
    <property type="evidence" value="ECO:0007669"/>
    <property type="project" value="UniProtKB-KW"/>
</dbReference>
<dbReference type="Gene3D" id="3.30.1180.10">
    <property type="match status" value="1"/>
</dbReference>
<dbReference type="Gene3D" id="3.40.50.10170">
    <property type="match status" value="1"/>
</dbReference>
<dbReference type="InterPro" id="IPR003797">
    <property type="entry name" value="DegV"/>
</dbReference>
<dbReference type="InterPro" id="IPR043168">
    <property type="entry name" value="DegV_C"/>
</dbReference>
<dbReference type="InterPro" id="IPR050270">
    <property type="entry name" value="DegV_domain_contain"/>
</dbReference>
<dbReference type="NCBIfam" id="TIGR00762">
    <property type="entry name" value="DegV"/>
    <property type="match status" value="1"/>
</dbReference>
<dbReference type="PANTHER" id="PTHR33434">
    <property type="entry name" value="DEGV DOMAIN-CONTAINING PROTEIN DR_1986-RELATED"/>
    <property type="match status" value="1"/>
</dbReference>
<dbReference type="PANTHER" id="PTHR33434:SF8">
    <property type="entry name" value="DEGV DOMAIN-CONTAINING PROTEIN SPR1019"/>
    <property type="match status" value="1"/>
</dbReference>
<dbReference type="Pfam" id="PF02645">
    <property type="entry name" value="DegV"/>
    <property type="match status" value="1"/>
</dbReference>
<dbReference type="SUPFAM" id="SSF82549">
    <property type="entry name" value="DAK1/DegV-like"/>
    <property type="match status" value="1"/>
</dbReference>
<dbReference type="PROSITE" id="PS51482">
    <property type="entry name" value="DEGV"/>
    <property type="match status" value="1"/>
</dbReference>
<reference key="1">
    <citation type="journal article" date="2001" name="Science">
        <title>Complete genome sequence of a virulent isolate of Streptococcus pneumoniae.</title>
        <authorList>
            <person name="Tettelin H."/>
            <person name="Nelson K.E."/>
            <person name="Paulsen I.T."/>
            <person name="Eisen J.A."/>
            <person name="Read T.D."/>
            <person name="Peterson S.N."/>
            <person name="Heidelberg J.F."/>
            <person name="DeBoy R.T."/>
            <person name="Haft D.H."/>
            <person name="Dodson R.J."/>
            <person name="Durkin A.S."/>
            <person name="Gwinn M.L."/>
            <person name="Kolonay J.F."/>
            <person name="Nelson W.C."/>
            <person name="Peterson J.D."/>
            <person name="Umayam L.A."/>
            <person name="White O."/>
            <person name="Salzberg S.L."/>
            <person name="Lewis M.R."/>
            <person name="Radune D."/>
            <person name="Holtzapple E.K."/>
            <person name="Khouri H.M."/>
            <person name="Wolf A.M."/>
            <person name="Utterback T.R."/>
            <person name="Hansen C.L."/>
            <person name="McDonald L.A."/>
            <person name="Feldblyum T.V."/>
            <person name="Angiuoli S.V."/>
            <person name="Dickinson T."/>
            <person name="Hickey E.K."/>
            <person name="Holt I.E."/>
            <person name="Loftus B.J."/>
            <person name="Yang F."/>
            <person name="Smith H.O."/>
            <person name="Venter J.C."/>
            <person name="Dougherty B.A."/>
            <person name="Morrison D.A."/>
            <person name="Hollingshead S.K."/>
            <person name="Fraser C.M."/>
        </authorList>
    </citation>
    <scope>NUCLEOTIDE SEQUENCE [LARGE SCALE GENOMIC DNA]</scope>
    <source>
        <strain>ATCC BAA-334 / TIGR4</strain>
    </source>
</reference>
<keyword id="KW-0446">Lipid-binding</keyword>
<keyword id="KW-1185">Reference proteome</keyword>
<gene>
    <name type="ordered locus">SP_1112</name>
</gene>
<comment type="function">
    <text evidence="1">May bind long-chain fatty acids, such as palmitate, and may play a role in lipid transport or fatty acid metabolism.</text>
</comment>
<comment type="interaction">
    <interactant intactId="EBI-6474517">
        <id>Q97QT7</id>
    </interactant>
    <interactant intactId="EBI-6474523">
        <id>A0A0H2UPN3</id>
        <label>SP_0859</label>
    </interactant>
    <organismsDiffer>false</organismsDiffer>
    <experiments>2</experiments>
</comment>